<reference key="1">
    <citation type="submission" date="2000-07" db="EMBL/GenBank/DDBJ databases">
        <title>Population genetic analysis of California Carpobrotus.</title>
        <authorList>
            <person name="Schierenbeck K."/>
            <person name="Symonds V."/>
            <person name="Bell J.R."/>
        </authorList>
    </citation>
    <scope>NUCLEOTIDE SEQUENCE [GENOMIC DNA]</scope>
</reference>
<feature type="chain" id="PRO_0000217599" description="Photosystem I assembly protein Ycf4">
    <location>
        <begin position="1"/>
        <end position="184"/>
    </location>
</feature>
<feature type="transmembrane region" description="Helical" evidence="1">
    <location>
        <begin position="21"/>
        <end position="43"/>
    </location>
</feature>
<feature type="transmembrane region" description="Helical" evidence="1">
    <location>
        <begin position="58"/>
        <end position="80"/>
    </location>
</feature>
<comment type="function">
    <text evidence="1">Seems to be required for the assembly of the photosystem I complex.</text>
</comment>
<comment type="subcellular location">
    <subcellularLocation>
        <location evidence="1">Plastid</location>
        <location evidence="1">Chloroplast thylakoid membrane</location>
        <topology evidence="1">Multi-pass membrane protein</topology>
    </subcellularLocation>
</comment>
<comment type="similarity">
    <text evidence="1">Belongs to the Ycf4 family.</text>
</comment>
<keyword id="KW-0150">Chloroplast</keyword>
<keyword id="KW-0472">Membrane</keyword>
<keyword id="KW-0602">Photosynthesis</keyword>
<keyword id="KW-0934">Plastid</keyword>
<keyword id="KW-0793">Thylakoid</keyword>
<keyword id="KW-0812">Transmembrane</keyword>
<keyword id="KW-1133">Transmembrane helix</keyword>
<dbReference type="EMBL" id="AF284694">
    <property type="protein sequence ID" value="AAG32309.1"/>
    <property type="molecule type" value="Genomic_DNA"/>
</dbReference>
<dbReference type="GO" id="GO:0009535">
    <property type="term" value="C:chloroplast thylakoid membrane"/>
    <property type="evidence" value="ECO:0007669"/>
    <property type="project" value="UniProtKB-SubCell"/>
</dbReference>
<dbReference type="GO" id="GO:0009522">
    <property type="term" value="C:photosystem I"/>
    <property type="evidence" value="ECO:0007669"/>
    <property type="project" value="InterPro"/>
</dbReference>
<dbReference type="GO" id="GO:0015979">
    <property type="term" value="P:photosynthesis"/>
    <property type="evidence" value="ECO:0007669"/>
    <property type="project" value="UniProtKB-UniRule"/>
</dbReference>
<dbReference type="HAMAP" id="MF_00437">
    <property type="entry name" value="Ycf4"/>
    <property type="match status" value="1"/>
</dbReference>
<dbReference type="InterPro" id="IPR003359">
    <property type="entry name" value="PSI_Ycf4_assembly"/>
</dbReference>
<dbReference type="NCBIfam" id="NF002712">
    <property type="entry name" value="PRK02542.1"/>
    <property type="match status" value="1"/>
</dbReference>
<dbReference type="PANTHER" id="PTHR33288">
    <property type="match status" value="1"/>
</dbReference>
<dbReference type="PANTHER" id="PTHR33288:SF4">
    <property type="entry name" value="PHOTOSYSTEM I ASSEMBLY PROTEIN YCF4"/>
    <property type="match status" value="1"/>
</dbReference>
<dbReference type="Pfam" id="PF02392">
    <property type="entry name" value="Ycf4"/>
    <property type="match status" value="1"/>
</dbReference>
<accession>Q9GDV1</accession>
<geneLocation type="chloroplast"/>
<sequence>MNWRSKRIWIELITGSRKISNFCWAFILFLGSLGFLLVGISSYLGRNLISLFPPQQILFFPQGIVMSFYGIAGLFISSYLWCTISWNVGSGYDRFDRKEGIVCIFRWGFPGKNRRIFLRFLIKDIQSIRIELKEGIYTRRVLYLEIRGQGAIPLTRTDDNLTPREIEQKAAELAYFLRIPIEVF</sequence>
<evidence type="ECO:0000255" key="1">
    <source>
        <dbReference type="HAMAP-Rule" id="MF_00437"/>
    </source>
</evidence>
<gene>
    <name evidence="1" type="primary">ycf4</name>
</gene>
<protein>
    <recommendedName>
        <fullName evidence="1">Photosystem I assembly protein Ycf4</fullName>
    </recommendedName>
</protein>
<name>YCF4_CARCL</name>
<organism>
    <name type="scientific">Carpobrotus chilensis</name>
    <name type="common">Sea fig</name>
    <name type="synonym">Mesembryanthemum chilense</name>
    <dbReference type="NCBI Taxonomy" id="142000"/>
    <lineage>
        <taxon>Eukaryota</taxon>
        <taxon>Viridiplantae</taxon>
        <taxon>Streptophyta</taxon>
        <taxon>Embryophyta</taxon>
        <taxon>Tracheophyta</taxon>
        <taxon>Spermatophyta</taxon>
        <taxon>Magnoliopsida</taxon>
        <taxon>eudicotyledons</taxon>
        <taxon>Gunneridae</taxon>
        <taxon>Pentapetalae</taxon>
        <taxon>Caryophyllales</taxon>
        <taxon>Aizoaceae</taxon>
        <taxon>Carpobrotus</taxon>
    </lineage>
</organism>
<proteinExistence type="inferred from homology"/>